<protein>
    <recommendedName>
        <fullName evidence="1">Nucleoside diphosphate kinase</fullName>
        <shortName evidence="1">NDK</shortName>
        <shortName evidence="1">NDP kinase</shortName>
        <ecNumber evidence="1">2.7.4.6</ecNumber>
    </recommendedName>
    <alternativeName>
        <fullName evidence="1">Nucleoside-2-P kinase</fullName>
    </alternativeName>
</protein>
<proteinExistence type="inferred from homology"/>
<accession>B9DSE2</accession>
<keyword id="KW-0067">ATP-binding</keyword>
<keyword id="KW-0963">Cytoplasm</keyword>
<keyword id="KW-0418">Kinase</keyword>
<keyword id="KW-0460">Magnesium</keyword>
<keyword id="KW-0479">Metal-binding</keyword>
<keyword id="KW-0546">Nucleotide metabolism</keyword>
<keyword id="KW-0547">Nucleotide-binding</keyword>
<keyword id="KW-0597">Phosphoprotein</keyword>
<keyword id="KW-1185">Reference proteome</keyword>
<keyword id="KW-0808">Transferase</keyword>
<evidence type="ECO:0000255" key="1">
    <source>
        <dbReference type="HAMAP-Rule" id="MF_00451"/>
    </source>
</evidence>
<name>NDK_STRU0</name>
<feature type="chain" id="PRO_1000192295" description="Nucleoside diphosphate kinase">
    <location>
        <begin position="1"/>
        <end position="144"/>
    </location>
</feature>
<feature type="active site" description="Pros-phosphohistidine intermediate" evidence="1">
    <location>
        <position position="120"/>
    </location>
</feature>
<feature type="binding site" evidence="1">
    <location>
        <position position="9"/>
    </location>
    <ligand>
        <name>ATP</name>
        <dbReference type="ChEBI" id="CHEBI:30616"/>
    </ligand>
</feature>
<feature type="binding site" evidence="1">
    <location>
        <position position="57"/>
    </location>
    <ligand>
        <name>ATP</name>
        <dbReference type="ChEBI" id="CHEBI:30616"/>
    </ligand>
</feature>
<feature type="binding site" evidence="1">
    <location>
        <position position="85"/>
    </location>
    <ligand>
        <name>ATP</name>
        <dbReference type="ChEBI" id="CHEBI:30616"/>
    </ligand>
</feature>
<feature type="binding site" evidence="1">
    <location>
        <position position="91"/>
    </location>
    <ligand>
        <name>ATP</name>
        <dbReference type="ChEBI" id="CHEBI:30616"/>
    </ligand>
</feature>
<feature type="binding site" evidence="1">
    <location>
        <position position="102"/>
    </location>
    <ligand>
        <name>ATP</name>
        <dbReference type="ChEBI" id="CHEBI:30616"/>
    </ligand>
</feature>
<feature type="binding site" evidence="1">
    <location>
        <position position="112"/>
    </location>
    <ligand>
        <name>ATP</name>
        <dbReference type="ChEBI" id="CHEBI:30616"/>
    </ligand>
</feature>
<dbReference type="EC" id="2.7.4.6" evidence="1"/>
<dbReference type="EMBL" id="AM946015">
    <property type="protein sequence ID" value="CAR42393.1"/>
    <property type="molecule type" value="Genomic_DNA"/>
</dbReference>
<dbReference type="RefSeq" id="WP_012658574.1">
    <property type="nucleotide sequence ID" value="NC_012004.1"/>
</dbReference>
<dbReference type="SMR" id="B9DSE2"/>
<dbReference type="STRING" id="218495.SUB1084"/>
<dbReference type="GeneID" id="93826361"/>
<dbReference type="KEGG" id="sub:SUB1084"/>
<dbReference type="eggNOG" id="COG0105">
    <property type="taxonomic scope" value="Bacteria"/>
</dbReference>
<dbReference type="HOGENOM" id="CLU_060216_6_3_9"/>
<dbReference type="OrthoDB" id="9801161at2"/>
<dbReference type="Proteomes" id="UP000000449">
    <property type="component" value="Chromosome"/>
</dbReference>
<dbReference type="GO" id="GO:0005737">
    <property type="term" value="C:cytoplasm"/>
    <property type="evidence" value="ECO:0007669"/>
    <property type="project" value="UniProtKB-SubCell"/>
</dbReference>
<dbReference type="GO" id="GO:0005524">
    <property type="term" value="F:ATP binding"/>
    <property type="evidence" value="ECO:0007669"/>
    <property type="project" value="UniProtKB-UniRule"/>
</dbReference>
<dbReference type="GO" id="GO:0046872">
    <property type="term" value="F:metal ion binding"/>
    <property type="evidence" value="ECO:0007669"/>
    <property type="project" value="UniProtKB-KW"/>
</dbReference>
<dbReference type="GO" id="GO:0004550">
    <property type="term" value="F:nucleoside diphosphate kinase activity"/>
    <property type="evidence" value="ECO:0007669"/>
    <property type="project" value="UniProtKB-UniRule"/>
</dbReference>
<dbReference type="GO" id="GO:0006241">
    <property type="term" value="P:CTP biosynthetic process"/>
    <property type="evidence" value="ECO:0007669"/>
    <property type="project" value="UniProtKB-UniRule"/>
</dbReference>
<dbReference type="GO" id="GO:0006183">
    <property type="term" value="P:GTP biosynthetic process"/>
    <property type="evidence" value="ECO:0007669"/>
    <property type="project" value="UniProtKB-UniRule"/>
</dbReference>
<dbReference type="GO" id="GO:0006228">
    <property type="term" value="P:UTP biosynthetic process"/>
    <property type="evidence" value="ECO:0007669"/>
    <property type="project" value="UniProtKB-UniRule"/>
</dbReference>
<dbReference type="CDD" id="cd04413">
    <property type="entry name" value="NDPk_I"/>
    <property type="match status" value="1"/>
</dbReference>
<dbReference type="FunFam" id="3.30.70.141:FF:000003">
    <property type="entry name" value="Nucleoside diphosphate kinase"/>
    <property type="match status" value="1"/>
</dbReference>
<dbReference type="Gene3D" id="3.30.70.141">
    <property type="entry name" value="Nucleoside diphosphate kinase-like domain"/>
    <property type="match status" value="1"/>
</dbReference>
<dbReference type="HAMAP" id="MF_00451">
    <property type="entry name" value="NDP_kinase"/>
    <property type="match status" value="1"/>
</dbReference>
<dbReference type="InterPro" id="IPR034907">
    <property type="entry name" value="NDK-like_dom"/>
</dbReference>
<dbReference type="InterPro" id="IPR036850">
    <property type="entry name" value="NDK-like_dom_sf"/>
</dbReference>
<dbReference type="InterPro" id="IPR001564">
    <property type="entry name" value="Nucleoside_diP_kinase"/>
</dbReference>
<dbReference type="NCBIfam" id="NF001908">
    <property type="entry name" value="PRK00668.1"/>
    <property type="match status" value="1"/>
</dbReference>
<dbReference type="PANTHER" id="PTHR11349">
    <property type="entry name" value="NUCLEOSIDE DIPHOSPHATE KINASE"/>
    <property type="match status" value="1"/>
</dbReference>
<dbReference type="Pfam" id="PF00334">
    <property type="entry name" value="NDK"/>
    <property type="match status" value="1"/>
</dbReference>
<dbReference type="PRINTS" id="PR01243">
    <property type="entry name" value="NUCDPKINASE"/>
</dbReference>
<dbReference type="SMART" id="SM00562">
    <property type="entry name" value="NDK"/>
    <property type="match status" value="1"/>
</dbReference>
<dbReference type="SUPFAM" id="SSF54919">
    <property type="entry name" value="Nucleoside diphosphate kinase, NDK"/>
    <property type="match status" value="1"/>
</dbReference>
<dbReference type="PROSITE" id="PS51374">
    <property type="entry name" value="NDPK_LIKE"/>
    <property type="match status" value="1"/>
</dbReference>
<reference key="1">
    <citation type="journal article" date="2009" name="BMC Genomics">
        <title>Evidence for niche adaptation in the genome of the bovine pathogen Streptococcus uberis.</title>
        <authorList>
            <person name="Ward P.N."/>
            <person name="Holden M.T.G."/>
            <person name="Leigh J.A."/>
            <person name="Lennard N."/>
            <person name="Bignell A."/>
            <person name="Barron A."/>
            <person name="Clark L."/>
            <person name="Quail M.A."/>
            <person name="Woodward J."/>
            <person name="Barrell B.G."/>
            <person name="Egan S.A."/>
            <person name="Field T.R."/>
            <person name="Maskell D."/>
            <person name="Kehoe M."/>
            <person name="Dowson C.G."/>
            <person name="Chanter N."/>
            <person name="Whatmore A.M."/>
            <person name="Bentley S.D."/>
            <person name="Parkhill J."/>
        </authorList>
    </citation>
    <scope>NUCLEOTIDE SEQUENCE [LARGE SCALE GENOMIC DNA]</scope>
    <source>
        <strain>ATCC BAA-854 / 0140J</strain>
    </source>
</reference>
<organism>
    <name type="scientific">Streptococcus uberis (strain ATCC BAA-854 / 0140J)</name>
    <dbReference type="NCBI Taxonomy" id="218495"/>
    <lineage>
        <taxon>Bacteria</taxon>
        <taxon>Bacillati</taxon>
        <taxon>Bacillota</taxon>
        <taxon>Bacilli</taxon>
        <taxon>Lactobacillales</taxon>
        <taxon>Streptococcaceae</taxon>
        <taxon>Streptococcus</taxon>
    </lineage>
</organism>
<sequence>MEKTFFMIKPDGVRRGLIGEVLQRIERRGFTLDALQLVTPSREHLDEHYHQLKDKAFYPGLIDYMMSGPILIGVISGNEVIESWRTMMGKTNPKDAAPGTIRGDFAQAPDENGEMMNVVHGSDSRDSAKREIELWLGHLTAENK</sequence>
<comment type="function">
    <text evidence="1">Major role in the synthesis of nucleoside triphosphates other than ATP. The ATP gamma phosphate is transferred to the NDP beta phosphate via a ping-pong mechanism, using a phosphorylated active-site intermediate.</text>
</comment>
<comment type="catalytic activity">
    <reaction evidence="1">
        <text>a 2'-deoxyribonucleoside 5'-diphosphate + ATP = a 2'-deoxyribonucleoside 5'-triphosphate + ADP</text>
        <dbReference type="Rhea" id="RHEA:44640"/>
        <dbReference type="ChEBI" id="CHEBI:30616"/>
        <dbReference type="ChEBI" id="CHEBI:61560"/>
        <dbReference type="ChEBI" id="CHEBI:73316"/>
        <dbReference type="ChEBI" id="CHEBI:456216"/>
        <dbReference type="EC" id="2.7.4.6"/>
    </reaction>
</comment>
<comment type="catalytic activity">
    <reaction evidence="1">
        <text>a ribonucleoside 5'-diphosphate + ATP = a ribonucleoside 5'-triphosphate + ADP</text>
        <dbReference type="Rhea" id="RHEA:18113"/>
        <dbReference type="ChEBI" id="CHEBI:30616"/>
        <dbReference type="ChEBI" id="CHEBI:57930"/>
        <dbReference type="ChEBI" id="CHEBI:61557"/>
        <dbReference type="ChEBI" id="CHEBI:456216"/>
        <dbReference type="EC" id="2.7.4.6"/>
    </reaction>
</comment>
<comment type="cofactor">
    <cofactor evidence="1">
        <name>Mg(2+)</name>
        <dbReference type="ChEBI" id="CHEBI:18420"/>
    </cofactor>
</comment>
<comment type="subunit">
    <text evidence="1">Homotetramer.</text>
</comment>
<comment type="subcellular location">
    <subcellularLocation>
        <location evidence="1">Cytoplasm</location>
    </subcellularLocation>
</comment>
<comment type="similarity">
    <text evidence="1">Belongs to the NDK family.</text>
</comment>
<gene>
    <name evidence="1" type="primary">ndk</name>
    <name type="ordered locus">SUB1084</name>
</gene>